<accession>O62827</accession>
<accession>Q08DC5</accession>
<accession>Q95KP0</accession>
<gene>
    <name type="primary">ADM</name>
</gene>
<name>ADML_BOVIN</name>
<dbReference type="EMBL" id="AJ001613">
    <property type="protein sequence ID" value="CAA04866.1"/>
    <property type="molecule type" value="mRNA"/>
</dbReference>
<dbReference type="EMBL" id="AB055107">
    <property type="protein sequence ID" value="BAB62176.1"/>
    <property type="molecule type" value="mRNA"/>
</dbReference>
<dbReference type="EMBL" id="BC123826">
    <property type="protein sequence ID" value="AAI23827.1"/>
    <property type="molecule type" value="mRNA"/>
</dbReference>
<dbReference type="RefSeq" id="NP_776313.1">
    <property type="nucleotide sequence ID" value="NM_173888.3"/>
</dbReference>
<dbReference type="RefSeq" id="XP_005215950.1">
    <property type="nucleotide sequence ID" value="XM_005215893.5"/>
</dbReference>
<dbReference type="RefSeq" id="XP_005215951.1">
    <property type="nucleotide sequence ID" value="XM_005215894.3"/>
</dbReference>
<dbReference type="RefSeq" id="XP_015330126.1">
    <property type="nucleotide sequence ID" value="XM_015474640.1"/>
</dbReference>
<dbReference type="SMR" id="O62827"/>
<dbReference type="FunCoup" id="O62827">
    <property type="interactions" value="175"/>
</dbReference>
<dbReference type="STRING" id="9913.ENSBTAP00000072566"/>
<dbReference type="PaxDb" id="9913-ENSBTAP00000028036"/>
<dbReference type="GeneID" id="280713"/>
<dbReference type="KEGG" id="bta:280713"/>
<dbReference type="CTD" id="133"/>
<dbReference type="VEuPathDB" id="HostDB:ENSBTAG00000021048"/>
<dbReference type="eggNOG" id="ENOG502S4SF">
    <property type="taxonomic scope" value="Eukaryota"/>
</dbReference>
<dbReference type="HOGENOM" id="CLU_099291_1_0_1"/>
<dbReference type="InParanoid" id="O62827"/>
<dbReference type="OMA" id="QSFLYCC"/>
<dbReference type="OrthoDB" id="8771893at2759"/>
<dbReference type="TreeFam" id="TF333447"/>
<dbReference type="Reactome" id="R-BTA-418555">
    <property type="pathway name" value="G alpha (s) signalling events"/>
</dbReference>
<dbReference type="Reactome" id="R-BTA-419812">
    <property type="pathway name" value="Calcitonin-like ligand receptors"/>
</dbReference>
<dbReference type="Reactome" id="R-BTA-9856530">
    <property type="pathway name" value="High laminar flow shear stress activates signaling by PIEZO1 and PECAM1:CDH5:KDR in endothelial cells"/>
</dbReference>
<dbReference type="Proteomes" id="UP000009136">
    <property type="component" value="Chromosome 15"/>
</dbReference>
<dbReference type="Bgee" id="ENSBTAG00000021048">
    <property type="expression patterns" value="Expressed in uterine cervix and 105 other cell types or tissues"/>
</dbReference>
<dbReference type="GO" id="GO:0005615">
    <property type="term" value="C:extracellular space"/>
    <property type="evidence" value="ECO:0000318"/>
    <property type="project" value="GO_Central"/>
</dbReference>
<dbReference type="GO" id="GO:0031700">
    <property type="term" value="F:adrenomedullin receptor binding"/>
    <property type="evidence" value="ECO:0000318"/>
    <property type="project" value="GO_Central"/>
</dbReference>
<dbReference type="GO" id="GO:0005179">
    <property type="term" value="F:hormone activity"/>
    <property type="evidence" value="ECO:0007669"/>
    <property type="project" value="UniProtKB-KW"/>
</dbReference>
<dbReference type="GO" id="GO:0007189">
    <property type="term" value="P:adenylate cyclase-activating G protein-coupled receptor signaling pathway"/>
    <property type="evidence" value="ECO:0000318"/>
    <property type="project" value="GO_Central"/>
</dbReference>
<dbReference type="GO" id="GO:1990410">
    <property type="term" value="P:adrenomedullin receptor signaling pathway"/>
    <property type="evidence" value="ECO:0000318"/>
    <property type="project" value="GO_Central"/>
</dbReference>
<dbReference type="GO" id="GO:0010460">
    <property type="term" value="P:positive regulation of heart rate"/>
    <property type="evidence" value="ECO:0000318"/>
    <property type="project" value="GO_Central"/>
</dbReference>
<dbReference type="GO" id="GO:0003073">
    <property type="term" value="P:regulation of systemic arterial blood pressure"/>
    <property type="evidence" value="ECO:0000318"/>
    <property type="project" value="GO_Central"/>
</dbReference>
<dbReference type="InterPro" id="IPR051665">
    <property type="entry name" value="Adrenomedullin-reg_peptide"/>
</dbReference>
<dbReference type="InterPro" id="IPR021116">
    <property type="entry name" value="Calcitonin/adrenomedullin"/>
</dbReference>
<dbReference type="InterPro" id="IPR001710">
    <property type="entry name" value="Pro-ADM"/>
</dbReference>
<dbReference type="PANTHER" id="PTHR23414">
    <property type="entry name" value="ADRENOMEDULLIN, ADM"/>
    <property type="match status" value="1"/>
</dbReference>
<dbReference type="PANTHER" id="PTHR23414:SF3">
    <property type="entry name" value="PRO-ADRENOMEDULLIN"/>
    <property type="match status" value="1"/>
</dbReference>
<dbReference type="Pfam" id="PF00214">
    <property type="entry name" value="Calc_CGRP_IAPP"/>
    <property type="match status" value="1"/>
</dbReference>
<dbReference type="PRINTS" id="PR00801">
    <property type="entry name" value="ADRENOMEDULN"/>
</dbReference>
<comment type="function">
    <text evidence="1">Adrenomedullin/ADM and proadrenomedullin N-20 terminal peptide/PAMP are peptide hormones that act as potent hypotensive and vasodilatator agents. Numerous actions have been reported most related to the physiologic control of fluid and electrolyte homeostasis.</text>
</comment>
<comment type="function">
    <molecule>Adrenomedullin</molecule>
    <text evidence="1">ADM function is mediated by the CALCRL-RAMP2 and CALCRL-RAMP3 receptor complexes with ADM showing the highest potency for the CALCRL-RAMP2 complex.</text>
</comment>
<comment type="subcellular location">
    <subcellularLocation>
        <location evidence="1">Secreted</location>
    </subcellularLocation>
</comment>
<comment type="similarity">
    <text evidence="6">Belongs to the adrenomedullin family.</text>
</comment>
<organism>
    <name type="scientific">Bos taurus</name>
    <name type="common">Bovine</name>
    <dbReference type="NCBI Taxonomy" id="9913"/>
    <lineage>
        <taxon>Eukaryota</taxon>
        <taxon>Metazoa</taxon>
        <taxon>Chordata</taxon>
        <taxon>Craniata</taxon>
        <taxon>Vertebrata</taxon>
        <taxon>Euteleostomi</taxon>
        <taxon>Mammalia</taxon>
        <taxon>Eutheria</taxon>
        <taxon>Laurasiatheria</taxon>
        <taxon>Artiodactyla</taxon>
        <taxon>Ruminantia</taxon>
        <taxon>Pecora</taxon>
        <taxon>Bovidae</taxon>
        <taxon>Bovinae</taxon>
        <taxon>Bos</taxon>
    </lineage>
</organism>
<sequence>MKLVPVALLYLGSLAFLGVDTARLDVAAEFRKKWNKWALSRGKRELRESSSYPTGLADVKAGPVQTLIRPQDVKGASRSPQASSPDAARIRVKRYRQSLNNFQGLRSFGCRFGTCTVQKLAHQIYHFTDKDKDGSAPRSKISPQGYGRRRRRSLPEAGLGRTLLQPPEPKLRGAPDSRVHQVLATLRI</sequence>
<evidence type="ECO:0000250" key="1">
    <source>
        <dbReference type="UniProtKB" id="P35318"/>
    </source>
</evidence>
<evidence type="ECO:0000250" key="2">
    <source>
        <dbReference type="UniProtKB" id="P43145"/>
    </source>
</evidence>
<evidence type="ECO:0000250" key="3">
    <source>
        <dbReference type="UniProtKB" id="P53366"/>
    </source>
</evidence>
<evidence type="ECO:0000256" key="4">
    <source>
        <dbReference type="SAM" id="MobiDB-lite"/>
    </source>
</evidence>
<evidence type="ECO:0000269" key="5">
    <source>
    </source>
</evidence>
<evidence type="ECO:0000305" key="6"/>
<protein>
    <recommendedName>
        <fullName>Pro-adrenomedullin</fullName>
    </recommendedName>
    <component>
        <recommendedName>
            <fullName evidence="1">Adrenomedullin</fullName>
            <shortName>AM</shortName>
        </recommendedName>
    </component>
    <component>
        <recommendedName>
            <fullName>Adrenomedullin-11-26</fullName>
            <shortName>AM 11-26</shortName>
        </recommendedName>
    </component>
    <component>
        <recommendedName>
            <fullName evidence="3">Proadrenomedullin N-20 terminal peptide</fullName>
        </recommendedName>
        <alternativeName>
            <fullName evidence="1">ProAM N-terminal 20 peptide</fullName>
            <shortName evidence="1">PAMP</shortName>
            <shortName>ProAM-N20</shortName>
        </alternativeName>
    </component>
</protein>
<feature type="signal peptide" evidence="3">
    <location>
        <begin position="1"/>
        <end position="21"/>
    </location>
</feature>
<feature type="peptide" id="PRO_0000000953" description="Proadrenomedullin N-20 terminal peptide" evidence="2">
    <location>
        <begin position="22"/>
        <end position="41"/>
    </location>
</feature>
<feature type="propeptide" id="PRO_0000000954" evidence="2">
    <location>
        <begin position="45"/>
        <end position="92"/>
    </location>
</feature>
<feature type="peptide" id="PRO_0000000955" description="Adrenomedullin" evidence="1">
    <location>
        <begin position="95"/>
        <end position="146"/>
    </location>
</feature>
<feature type="peptide" id="PRO_0000246182" description="Adrenomedullin-11-26" evidence="5">
    <location>
        <begin position="105"/>
        <end position="120"/>
    </location>
</feature>
<feature type="propeptide" id="PRO_0000000956" description="PreproAM C-terminal fragment" evidence="2">
    <location>
        <begin position="153"/>
        <end position="188"/>
    </location>
</feature>
<feature type="region of interest" description="Disordered" evidence="4">
    <location>
        <begin position="69"/>
        <end position="89"/>
    </location>
</feature>
<feature type="region of interest" description="Disordered" evidence="4">
    <location>
        <begin position="129"/>
        <end position="175"/>
    </location>
</feature>
<feature type="site" description="Required for CALCRL receptor interaction" evidence="1">
    <location>
        <position position="116"/>
    </location>
</feature>
<feature type="site" description="Required for CALCRL receptor interaction" evidence="1">
    <location>
        <position position="125"/>
    </location>
</feature>
<feature type="modified residue" description="Arginine amide" evidence="1">
    <location>
        <position position="41"/>
    </location>
</feature>
<feature type="modified residue" description="Tyrosine amide" evidence="1">
    <location>
        <position position="146"/>
    </location>
</feature>
<feature type="disulfide bond" evidence="1">
    <location>
        <begin position="110"/>
        <end position="115"/>
    </location>
</feature>
<feature type="sequence conflict" description="In Ref. 1; CAA04866." evidence="6" ref="1">
    <original>L</original>
    <variation>M</variation>
    <location>
        <position position="9"/>
    </location>
</feature>
<proteinExistence type="evidence at transcript level"/>
<keyword id="KW-0027">Amidation</keyword>
<keyword id="KW-0165">Cleavage on pair of basic residues</keyword>
<keyword id="KW-1015">Disulfide bond</keyword>
<keyword id="KW-0372">Hormone</keyword>
<keyword id="KW-1185">Reference proteome</keyword>
<keyword id="KW-0964">Secreted</keyword>
<keyword id="KW-0732">Signal</keyword>
<reference key="1">
    <citation type="journal article" date="1998" name="Life Sci.">
        <title>Cloning of bovine preproadrenomedullin and inhibition of its basal expression in vascular endothelial cells by staurosporine.</title>
        <authorList>
            <person name="Barker S."/>
            <person name="Wood E."/>
            <person name="Clark A.J.L."/>
            <person name="Corder R."/>
        </authorList>
    </citation>
    <scope>NUCLEOTIDE SEQUENCE [MRNA]</scope>
    <source>
        <tissue>Aorta</tissue>
    </source>
</reference>
<reference key="2">
    <citation type="journal article" date="2001" name="Peptides">
        <title>Adrenomedullin (11-26): a novel endogenous hypertensive peptide isolated from bovine adrenal medulla.</title>
        <authorList>
            <person name="Kitamura K."/>
            <person name="Matsui E."/>
            <person name="Kato J."/>
            <person name="Katoh F."/>
            <person name="Kita T."/>
            <person name="Tsuji T."/>
            <person name="Kangawa K."/>
            <person name="Eto T."/>
        </authorList>
    </citation>
    <scope>NUCLEOTIDE SEQUENCE [MRNA]</scope>
    <scope>IDENTIFICATION OF AM 11-26</scope>
</reference>
<reference key="3">
    <citation type="submission" date="2006-09" db="EMBL/GenBank/DDBJ databases">
        <authorList>
            <consortium name="NIH - Mammalian Gene Collection (MGC) project"/>
        </authorList>
    </citation>
    <scope>NUCLEOTIDE SEQUENCE [LARGE SCALE MRNA]</scope>
    <source>
        <strain>Hereford</strain>
        <tissue>Fetal muscle</tissue>
    </source>
</reference>